<organism>
    <name type="scientific">Saccharomyces cerevisiae (strain ATCC 204508 / S288c)</name>
    <name type="common">Baker's yeast</name>
    <dbReference type="NCBI Taxonomy" id="559292"/>
    <lineage>
        <taxon>Eukaryota</taxon>
        <taxon>Fungi</taxon>
        <taxon>Dikarya</taxon>
        <taxon>Ascomycota</taxon>
        <taxon>Saccharomycotina</taxon>
        <taxon>Saccharomycetes</taxon>
        <taxon>Saccharomycetales</taxon>
        <taxon>Saccharomycetaceae</taxon>
        <taxon>Saccharomyces</taxon>
    </lineage>
</organism>
<accession>P02407</accession>
<accession>D6VZF0</accession>
<comment type="function">
    <text evidence="7">Component of the ribosome, a large ribonucleoprotein complex responsible for the synthesis of proteins in the cell. The small ribosomal subunit (SSU) binds messenger RNAs (mRNAs) and translates the encoded message by selecting cognate aminoacyl-transfer RNA (tRNA) molecules. The large subunit (LSU) contains the ribosomal catalytic site termed the peptidyl transferase center (PTC), which catalyzes the formation of peptide bonds, thereby polymerizing the amino acids delivered by tRNAs into a polypeptide chain. The nascent polypeptides leave the ribosome through a tunnel in the LSU and interact with protein factors that function in enzymatic processing, targeting, and the membrane insertion of nascent chains at the exit of the ribosomal tunnel.</text>
</comment>
<comment type="subunit">
    <text evidence="3 8">Component of the small ribosomal subunit (SSU). Mature yeast ribosomes consist of a small (40S) and a large (60S) subunit. The 40S small subunit contains 1 molecule of ribosomal RNA (18S rRNA) and 33 different proteins (encoded by 57 genes). The large 60S subunit contains 3 rRNA molecules (25S, 5.8S and 5S rRNA) and 46 different proteins (encoded by 81 genes) (PubMed:22096102, PubMed:9559554).</text>
</comment>
<comment type="subcellular location">
    <subcellularLocation>
        <location evidence="1 3">Cytoplasm</location>
    </subcellularLocation>
</comment>
<comment type="miscellaneous">
    <text evidence="2">Present with 30900 molecules/cell in log phase SD medium.</text>
</comment>
<comment type="miscellaneous">
    <text evidence="6">There are 2 genes for eS17 in yeast.</text>
</comment>
<comment type="similarity">
    <text evidence="6">Belongs to the eukaryotic ribosomal protein eS17 family.</text>
</comment>
<sequence>MGRVRTKTVKRASKALIERYYPKLTLDFQTNKRLCDEIATIQSKRLRNKIAGYTTHLMKRIQKGPVRGISFKLQEEERERKDQYVPEVSALDLSRSNGVLNVDNQTSDLVKSLGLKLPLSVINVSAQRDRRYRKRV</sequence>
<protein>
    <recommendedName>
        <fullName evidence="4">Small ribosomal subunit protein eS17A</fullName>
    </recommendedName>
    <alternativeName>
        <fullName evidence="5">40S ribosomal protein S17-A</fullName>
    </alternativeName>
    <alternativeName>
        <fullName>RP51A</fullName>
    </alternativeName>
</protein>
<dbReference type="EMBL" id="J01349">
    <property type="protein sequence ID" value="AAA88733.1"/>
    <property type="molecule type" value="Genomic_DNA"/>
</dbReference>
<dbReference type="EMBL" id="Z46659">
    <property type="protein sequence ID" value="CAA86631.1"/>
    <property type="molecule type" value="Genomic_DNA"/>
</dbReference>
<dbReference type="EMBL" id="BK006946">
    <property type="protein sequence ID" value="DAA09874.1"/>
    <property type="molecule type" value="Genomic_DNA"/>
</dbReference>
<dbReference type="PIR" id="A02784">
    <property type="entry name" value="R5BY51"/>
</dbReference>
<dbReference type="RefSeq" id="NP_013688.1">
    <property type="nucleotide sequence ID" value="NM_001182382.1"/>
</dbReference>
<dbReference type="PDB" id="3J6X">
    <property type="method" value="EM"/>
    <property type="resolution" value="6.10 A"/>
    <property type="chains" value="17=1-136"/>
</dbReference>
<dbReference type="PDB" id="3J6Y">
    <property type="method" value="EM"/>
    <property type="resolution" value="6.10 A"/>
    <property type="chains" value="17=1-136"/>
</dbReference>
<dbReference type="PDB" id="3J77">
    <property type="method" value="EM"/>
    <property type="resolution" value="6.20 A"/>
    <property type="chains" value="17=1-136"/>
</dbReference>
<dbReference type="PDB" id="3J78">
    <property type="method" value="EM"/>
    <property type="resolution" value="6.30 A"/>
    <property type="chains" value="17=1-136"/>
</dbReference>
<dbReference type="PDB" id="4U3M">
    <property type="method" value="X-ray"/>
    <property type="resolution" value="3.00 A"/>
    <property type="chains" value="C7/c7=1-136"/>
</dbReference>
<dbReference type="PDB" id="4U3N">
    <property type="method" value="X-ray"/>
    <property type="resolution" value="3.20 A"/>
    <property type="chains" value="C7/c7=1-136"/>
</dbReference>
<dbReference type="PDB" id="4U3U">
    <property type="method" value="X-ray"/>
    <property type="resolution" value="2.90 A"/>
    <property type="chains" value="C7/c7=1-136"/>
</dbReference>
<dbReference type="PDB" id="4U4N">
    <property type="method" value="X-ray"/>
    <property type="resolution" value="3.10 A"/>
    <property type="chains" value="C7/c7=1-136"/>
</dbReference>
<dbReference type="PDB" id="4U4O">
    <property type="method" value="X-ray"/>
    <property type="resolution" value="3.60 A"/>
    <property type="chains" value="C7/c7=1-136"/>
</dbReference>
<dbReference type="PDB" id="4U4Q">
    <property type="method" value="X-ray"/>
    <property type="resolution" value="3.00 A"/>
    <property type="chains" value="C7/c7=1-136"/>
</dbReference>
<dbReference type="PDB" id="4U4R">
    <property type="method" value="X-ray"/>
    <property type="resolution" value="2.80 A"/>
    <property type="chains" value="C7/c7=1-136"/>
</dbReference>
<dbReference type="PDB" id="4U4U">
    <property type="method" value="X-ray"/>
    <property type="resolution" value="3.00 A"/>
    <property type="chains" value="C7/c7=1-136"/>
</dbReference>
<dbReference type="PDB" id="4U4Y">
    <property type="method" value="X-ray"/>
    <property type="resolution" value="3.20 A"/>
    <property type="chains" value="C7/c7=1-136"/>
</dbReference>
<dbReference type="PDB" id="4U4Z">
    <property type="method" value="X-ray"/>
    <property type="resolution" value="3.10 A"/>
    <property type="chains" value="C7/c7=1-136"/>
</dbReference>
<dbReference type="PDB" id="4U50">
    <property type="method" value="X-ray"/>
    <property type="resolution" value="3.20 A"/>
    <property type="chains" value="C7/c7=1-136"/>
</dbReference>
<dbReference type="PDB" id="4U51">
    <property type="method" value="X-ray"/>
    <property type="resolution" value="3.20 A"/>
    <property type="chains" value="C7/c7=1-136"/>
</dbReference>
<dbReference type="PDB" id="4U52">
    <property type="method" value="X-ray"/>
    <property type="resolution" value="3.00 A"/>
    <property type="chains" value="C7/c7=1-136"/>
</dbReference>
<dbReference type="PDB" id="4U53">
    <property type="method" value="X-ray"/>
    <property type="resolution" value="3.30 A"/>
    <property type="chains" value="C7/c7=1-136"/>
</dbReference>
<dbReference type="PDB" id="4U55">
    <property type="method" value="X-ray"/>
    <property type="resolution" value="3.20 A"/>
    <property type="chains" value="C7/c7=1-136"/>
</dbReference>
<dbReference type="PDB" id="4U56">
    <property type="method" value="X-ray"/>
    <property type="resolution" value="3.45 A"/>
    <property type="chains" value="C7/c7=1-136"/>
</dbReference>
<dbReference type="PDB" id="4U6F">
    <property type="method" value="X-ray"/>
    <property type="resolution" value="3.10 A"/>
    <property type="chains" value="C7/c7=1-136"/>
</dbReference>
<dbReference type="PDB" id="4V6I">
    <property type="method" value="EM"/>
    <property type="resolution" value="8.80 A"/>
    <property type="chains" value="AQ=1-136"/>
</dbReference>
<dbReference type="PDB" id="4V7R">
    <property type="method" value="X-ray"/>
    <property type="resolution" value="4.00 A"/>
    <property type="chains" value="AK/CK=1-136"/>
</dbReference>
<dbReference type="PDB" id="4V88">
    <property type="method" value="X-ray"/>
    <property type="resolution" value="3.00 A"/>
    <property type="chains" value="AR/CR=1-136"/>
</dbReference>
<dbReference type="PDB" id="4V8Y">
    <property type="method" value="EM"/>
    <property type="resolution" value="4.30 A"/>
    <property type="chains" value="AR=1-136"/>
</dbReference>
<dbReference type="PDB" id="4V8Z">
    <property type="method" value="EM"/>
    <property type="resolution" value="6.60 A"/>
    <property type="chains" value="AR=1-136"/>
</dbReference>
<dbReference type="PDB" id="4V92">
    <property type="method" value="EM"/>
    <property type="resolution" value="3.70 A"/>
    <property type="chains" value="R=2-125"/>
</dbReference>
<dbReference type="PDB" id="5DAT">
    <property type="method" value="X-ray"/>
    <property type="resolution" value="3.15 A"/>
    <property type="chains" value="C7/c7=1-136"/>
</dbReference>
<dbReference type="PDB" id="5DC3">
    <property type="method" value="X-ray"/>
    <property type="resolution" value="3.25 A"/>
    <property type="chains" value="C7/c7=1-136"/>
</dbReference>
<dbReference type="PDB" id="5DGE">
    <property type="method" value="X-ray"/>
    <property type="resolution" value="3.45 A"/>
    <property type="chains" value="C7/c7=1-136"/>
</dbReference>
<dbReference type="PDB" id="5DGF">
    <property type="method" value="X-ray"/>
    <property type="resolution" value="3.30 A"/>
    <property type="chains" value="C7/c7=1-136"/>
</dbReference>
<dbReference type="PDB" id="5DGV">
    <property type="method" value="X-ray"/>
    <property type="resolution" value="3.10 A"/>
    <property type="chains" value="C7/c7=1-136"/>
</dbReference>
<dbReference type="PDB" id="5FCI">
    <property type="method" value="X-ray"/>
    <property type="resolution" value="3.40 A"/>
    <property type="chains" value="C7/c7=1-136"/>
</dbReference>
<dbReference type="PDB" id="5FCJ">
    <property type="method" value="X-ray"/>
    <property type="resolution" value="3.10 A"/>
    <property type="chains" value="C7/c7=1-136"/>
</dbReference>
<dbReference type="PDB" id="5I4L">
    <property type="method" value="X-ray"/>
    <property type="resolution" value="3.10 A"/>
    <property type="chains" value="C7/c7=1-136"/>
</dbReference>
<dbReference type="PDB" id="5JUO">
    <property type="method" value="EM"/>
    <property type="resolution" value="4.00 A"/>
    <property type="chains" value="OB=1-136"/>
</dbReference>
<dbReference type="PDB" id="5JUP">
    <property type="method" value="EM"/>
    <property type="resolution" value="3.50 A"/>
    <property type="chains" value="OB=1-136"/>
</dbReference>
<dbReference type="PDB" id="5JUS">
    <property type="method" value="EM"/>
    <property type="resolution" value="4.20 A"/>
    <property type="chains" value="OB=1-136"/>
</dbReference>
<dbReference type="PDB" id="5JUT">
    <property type="method" value="EM"/>
    <property type="resolution" value="4.00 A"/>
    <property type="chains" value="OB=1-136"/>
</dbReference>
<dbReference type="PDB" id="5JUU">
    <property type="method" value="EM"/>
    <property type="resolution" value="4.00 A"/>
    <property type="chains" value="OB=1-136"/>
</dbReference>
<dbReference type="PDB" id="5LYB">
    <property type="method" value="X-ray"/>
    <property type="resolution" value="3.25 A"/>
    <property type="chains" value="C7/c7=2-126"/>
</dbReference>
<dbReference type="PDB" id="5MEI">
    <property type="method" value="X-ray"/>
    <property type="resolution" value="3.50 A"/>
    <property type="chains" value="c7=2-122"/>
</dbReference>
<dbReference type="PDB" id="5NDG">
    <property type="method" value="X-ray"/>
    <property type="resolution" value="3.70 A"/>
    <property type="chains" value="C7/c7=1-136"/>
</dbReference>
<dbReference type="PDB" id="5NDV">
    <property type="method" value="X-ray"/>
    <property type="resolution" value="3.30 A"/>
    <property type="chains" value="C7/c7=1-136"/>
</dbReference>
<dbReference type="PDB" id="5NDW">
    <property type="method" value="X-ray"/>
    <property type="resolution" value="3.70 A"/>
    <property type="chains" value="C7/c7=1-136"/>
</dbReference>
<dbReference type="PDB" id="5OBM">
    <property type="method" value="X-ray"/>
    <property type="resolution" value="3.40 A"/>
    <property type="chains" value="C7/c7=1-136"/>
</dbReference>
<dbReference type="PDB" id="5ON6">
    <property type="method" value="X-ray"/>
    <property type="resolution" value="3.10 A"/>
    <property type="chains" value="S/c7=2-126"/>
</dbReference>
<dbReference type="PDB" id="5TBW">
    <property type="method" value="X-ray"/>
    <property type="resolution" value="3.00 A"/>
    <property type="chains" value="S=2-126, c7=2-122"/>
</dbReference>
<dbReference type="PDB" id="6EML">
    <property type="method" value="EM"/>
    <property type="resolution" value="3.60 A"/>
    <property type="chains" value="C=1-136"/>
</dbReference>
<dbReference type="PDB" id="6FAI">
    <property type="method" value="EM"/>
    <property type="resolution" value="3.40 A"/>
    <property type="chains" value="R=1-136"/>
</dbReference>
<dbReference type="PDB" id="6HHQ">
    <property type="method" value="X-ray"/>
    <property type="resolution" value="3.10 A"/>
    <property type="chains" value="S/c7=1-136"/>
</dbReference>
<dbReference type="PDB" id="6I7O">
    <property type="method" value="EM"/>
    <property type="resolution" value="5.30 A"/>
    <property type="chains" value="G/Gb=2-126"/>
</dbReference>
<dbReference type="PDB" id="6Q8Y">
    <property type="method" value="EM"/>
    <property type="resolution" value="3.10 A"/>
    <property type="chains" value="G=2-126"/>
</dbReference>
<dbReference type="PDB" id="6RBD">
    <property type="method" value="EM"/>
    <property type="resolution" value="3.47 A"/>
    <property type="chains" value="R=1-136"/>
</dbReference>
<dbReference type="PDB" id="6RBE">
    <property type="method" value="EM"/>
    <property type="resolution" value="3.80 A"/>
    <property type="chains" value="R=1-136"/>
</dbReference>
<dbReference type="PDB" id="6S47">
    <property type="method" value="EM"/>
    <property type="resolution" value="3.28 A"/>
    <property type="chains" value="BS=2-136"/>
</dbReference>
<dbReference type="PDB" id="6T4Q">
    <property type="method" value="EM"/>
    <property type="resolution" value="2.60 A"/>
    <property type="chains" value="SR=2-126"/>
</dbReference>
<dbReference type="PDB" id="6WDR">
    <property type="method" value="EM"/>
    <property type="resolution" value="3.70 A"/>
    <property type="chains" value="R=2-126"/>
</dbReference>
<dbReference type="PDB" id="6Y7C">
    <property type="method" value="EM"/>
    <property type="resolution" value="3.80 A"/>
    <property type="chains" value="R=1-136"/>
</dbReference>
<dbReference type="PDB" id="6Z6J">
    <property type="method" value="EM"/>
    <property type="resolution" value="3.40 A"/>
    <property type="chains" value="SR=1-136"/>
</dbReference>
<dbReference type="PDB" id="6Z6K">
    <property type="method" value="EM"/>
    <property type="resolution" value="3.40 A"/>
    <property type="chains" value="SR=1-136"/>
</dbReference>
<dbReference type="PDB" id="6ZCE">
    <property type="method" value="EM"/>
    <property type="resolution" value="5.30 A"/>
    <property type="chains" value="S=1-136"/>
</dbReference>
<dbReference type="PDB" id="6ZU9">
    <property type="method" value="EM"/>
    <property type="resolution" value="6.20 A"/>
    <property type="chains" value="I=1-136"/>
</dbReference>
<dbReference type="PDB" id="6ZVI">
    <property type="method" value="EM"/>
    <property type="resolution" value="3.00 A"/>
    <property type="chains" value="z=2-126"/>
</dbReference>
<dbReference type="PDB" id="7MPI">
    <property type="method" value="EM"/>
    <property type="resolution" value="3.05 A"/>
    <property type="chains" value="BR=2-126"/>
</dbReference>
<dbReference type="PDB" id="7MPJ">
    <property type="method" value="EM"/>
    <property type="resolution" value="2.70 A"/>
    <property type="chains" value="BR=2-126"/>
</dbReference>
<dbReference type="PDB" id="7N8B">
    <property type="method" value="EM"/>
    <property type="resolution" value="3.05 A"/>
    <property type="chains" value="BR=2-126"/>
</dbReference>
<dbReference type="PDB" id="7ZRS">
    <property type="method" value="EM"/>
    <property type="resolution" value="4.80 A"/>
    <property type="chains" value="AR=1-136"/>
</dbReference>
<dbReference type="PDB" id="7ZUW">
    <property type="method" value="EM"/>
    <property type="resolution" value="4.30 A"/>
    <property type="chains" value="AR=1-136"/>
</dbReference>
<dbReference type="PDB" id="7ZUX">
    <property type="method" value="EM"/>
    <property type="resolution" value="2.50 A"/>
    <property type="chains" value="DR=1-136"/>
</dbReference>
<dbReference type="PDB" id="7ZW0">
    <property type="method" value="EM"/>
    <property type="resolution" value="2.40 A"/>
    <property type="chains" value="sG=1-136"/>
</dbReference>
<dbReference type="PDB" id="8BN3">
    <property type="method" value="EM"/>
    <property type="resolution" value="2.40 A"/>
    <property type="chains" value="C7=2-126"/>
</dbReference>
<dbReference type="PDB" id="8BQD">
    <property type="method" value="EM"/>
    <property type="resolution" value="3.90 A"/>
    <property type="chains" value="G=2-126"/>
</dbReference>
<dbReference type="PDB" id="8BQX">
    <property type="method" value="EM"/>
    <property type="resolution" value="3.80 A"/>
    <property type="chains" value="G=2-126"/>
</dbReference>
<dbReference type="PDB" id="8C01">
    <property type="method" value="EM"/>
    <property type="resolution" value="2.70 A"/>
    <property type="chains" value="C=1-136"/>
</dbReference>
<dbReference type="PDB" id="8CAH">
    <property type="method" value="EM"/>
    <property type="resolution" value="3.00 A"/>
    <property type="chains" value="H=1-136"/>
</dbReference>
<dbReference type="PDB" id="8CAS">
    <property type="method" value="EM"/>
    <property type="resolution" value="3.30 A"/>
    <property type="chains" value="I=1-136"/>
</dbReference>
<dbReference type="PDB" id="8CBJ">
    <property type="method" value="EM"/>
    <property type="resolution" value="3.80 A"/>
    <property type="chains" value="R=1-136"/>
</dbReference>
<dbReference type="PDB" id="8CCS">
    <property type="method" value="EM"/>
    <property type="resolution" value="1.97 A"/>
    <property type="chains" value="t=1-136"/>
</dbReference>
<dbReference type="PDB" id="8CDL">
    <property type="method" value="EM"/>
    <property type="resolution" value="2.72 A"/>
    <property type="chains" value="t=1-136"/>
</dbReference>
<dbReference type="PDB" id="8CDR">
    <property type="method" value="EM"/>
    <property type="resolution" value="2.04 A"/>
    <property type="chains" value="t=1-136"/>
</dbReference>
<dbReference type="PDB" id="8CEH">
    <property type="method" value="EM"/>
    <property type="resolution" value="2.05 A"/>
    <property type="chains" value="t=1-136"/>
</dbReference>
<dbReference type="PDB" id="8CF5">
    <property type="method" value="EM"/>
    <property type="resolution" value="2.71 A"/>
    <property type="chains" value="t=1-136"/>
</dbReference>
<dbReference type="PDB" id="8CG8">
    <property type="method" value="EM"/>
    <property type="resolution" value="2.57 A"/>
    <property type="chains" value="t=1-136"/>
</dbReference>
<dbReference type="PDB" id="8CGN">
    <property type="method" value="EM"/>
    <property type="resolution" value="2.28 A"/>
    <property type="chains" value="t=1-136"/>
</dbReference>
<dbReference type="PDB" id="8CIV">
    <property type="method" value="EM"/>
    <property type="resolution" value="2.47 A"/>
    <property type="chains" value="t=1-136"/>
</dbReference>
<dbReference type="PDB" id="8CKU">
    <property type="method" value="EM"/>
    <property type="resolution" value="3.11 A"/>
    <property type="chains" value="t=1-136"/>
</dbReference>
<dbReference type="PDB" id="8CMJ">
    <property type="method" value="EM"/>
    <property type="resolution" value="3.79 A"/>
    <property type="chains" value="t=1-136"/>
</dbReference>
<dbReference type="PDB" id="8EUB">
    <property type="method" value="EM"/>
    <property type="resolution" value="2.52 A"/>
    <property type="chains" value="BR=1-136"/>
</dbReference>
<dbReference type="PDB" id="8EVP">
    <property type="method" value="EM"/>
    <property type="resolution" value="2.38 A"/>
    <property type="chains" value="BR=1-136"/>
</dbReference>
<dbReference type="PDB" id="8EVQ">
    <property type="method" value="EM"/>
    <property type="resolution" value="2.72 A"/>
    <property type="chains" value="BR=1-136"/>
</dbReference>
<dbReference type="PDB" id="8EVR">
    <property type="method" value="EM"/>
    <property type="resolution" value="2.87 A"/>
    <property type="chains" value="BR=1-136"/>
</dbReference>
<dbReference type="PDB" id="8EVS">
    <property type="method" value="EM"/>
    <property type="resolution" value="2.62 A"/>
    <property type="chains" value="BR=1-136"/>
</dbReference>
<dbReference type="PDB" id="8EVT">
    <property type="method" value="EM"/>
    <property type="resolution" value="2.20 A"/>
    <property type="chains" value="BR=1-136"/>
</dbReference>
<dbReference type="PDB" id="8EWB">
    <property type="method" value="EM"/>
    <property type="resolution" value="2.87 A"/>
    <property type="chains" value="BR=1-136"/>
</dbReference>
<dbReference type="PDB" id="8EWC">
    <property type="method" value="EM"/>
    <property type="resolution" value="2.45 A"/>
    <property type="chains" value="BR=1-136"/>
</dbReference>
<dbReference type="PDB" id="8K2D">
    <property type="method" value="EM"/>
    <property type="resolution" value="3.20 A"/>
    <property type="chains" value="SR=1-136"/>
</dbReference>
<dbReference type="PDB" id="8K82">
    <property type="method" value="EM"/>
    <property type="resolution" value="3.00 A"/>
    <property type="chains" value="SR=1-136"/>
</dbReference>
<dbReference type="PDB" id="8P4V">
    <property type="method" value="X-ray"/>
    <property type="resolution" value="3.16 A"/>
    <property type="chains" value="c7=1-136"/>
</dbReference>
<dbReference type="PDB" id="8P9A">
    <property type="method" value="X-ray"/>
    <property type="resolution" value="2.90 A"/>
    <property type="chains" value="S/c7=1-136"/>
</dbReference>
<dbReference type="PDB" id="8T2X">
    <property type="method" value="EM"/>
    <property type="resolution" value="2.46 A"/>
    <property type="chains" value="BR=1-136"/>
</dbReference>
<dbReference type="PDB" id="8T2Y">
    <property type="method" value="EM"/>
    <property type="resolution" value="2.20 A"/>
    <property type="chains" value="BR=1-136"/>
</dbReference>
<dbReference type="PDB" id="8T2Z">
    <property type="method" value="EM"/>
    <property type="resolution" value="2.40 A"/>
    <property type="chains" value="BR=1-136"/>
</dbReference>
<dbReference type="PDB" id="8T30">
    <property type="method" value="EM"/>
    <property type="resolution" value="2.88 A"/>
    <property type="chains" value="BR=1-136"/>
</dbReference>
<dbReference type="PDB" id="8T3A">
    <property type="method" value="EM"/>
    <property type="resolution" value="2.86 A"/>
    <property type="chains" value="BR=1-136"/>
</dbReference>
<dbReference type="PDB" id="8T3B">
    <property type="method" value="EM"/>
    <property type="resolution" value="3.08 A"/>
    <property type="chains" value="BR=1-136"/>
</dbReference>
<dbReference type="PDB" id="8T3C">
    <property type="method" value="EM"/>
    <property type="resolution" value="3.86 A"/>
    <property type="chains" value="BR=1-136"/>
</dbReference>
<dbReference type="PDB" id="8T3D">
    <property type="method" value="EM"/>
    <property type="resolution" value="2.95 A"/>
    <property type="chains" value="BR=1-136"/>
</dbReference>
<dbReference type="PDB" id="8T3E">
    <property type="method" value="EM"/>
    <property type="resolution" value="3.04 A"/>
    <property type="chains" value="BR=1-136"/>
</dbReference>
<dbReference type="PDB" id="8T3F">
    <property type="method" value="EM"/>
    <property type="resolution" value="3.09 A"/>
    <property type="chains" value="BR=1-136"/>
</dbReference>
<dbReference type="PDB" id="8UT0">
    <property type="method" value="EM"/>
    <property type="resolution" value="3.22 A"/>
    <property type="chains" value="SG=2-126"/>
</dbReference>
<dbReference type="PDB" id="8UTI">
    <property type="method" value="EM"/>
    <property type="resolution" value="3.13 A"/>
    <property type="chains" value="SG=2-126"/>
</dbReference>
<dbReference type="PDB" id="8XU8">
    <property type="method" value="EM"/>
    <property type="resolution" value="3.40 A"/>
    <property type="chains" value="SG=2-122"/>
</dbReference>
<dbReference type="PDB" id="8YLD">
    <property type="method" value="EM"/>
    <property type="resolution" value="3.90 A"/>
    <property type="chains" value="SG=2-122"/>
</dbReference>
<dbReference type="PDB" id="8YLR">
    <property type="method" value="EM"/>
    <property type="resolution" value="3.90 A"/>
    <property type="chains" value="SG=2-122"/>
</dbReference>
<dbReference type="PDB" id="8Z70">
    <property type="method" value="EM"/>
    <property type="resolution" value="3.20 A"/>
    <property type="chains" value="SG=2-122"/>
</dbReference>
<dbReference type="PDB" id="8Z71">
    <property type="method" value="EM"/>
    <property type="resolution" value="3.60 A"/>
    <property type="chains" value="SG=2-122"/>
</dbReference>
<dbReference type="PDB" id="9F9S">
    <property type="method" value="EM"/>
    <property type="resolution" value="2.90 A"/>
    <property type="chains" value="Rr=1-136"/>
</dbReference>
<dbReference type="PDBsum" id="3J6X"/>
<dbReference type="PDBsum" id="3J6Y"/>
<dbReference type="PDBsum" id="3J77"/>
<dbReference type="PDBsum" id="3J78"/>
<dbReference type="PDBsum" id="4U3M"/>
<dbReference type="PDBsum" id="4U3N"/>
<dbReference type="PDBsum" id="4U3U"/>
<dbReference type="PDBsum" id="4U4N"/>
<dbReference type="PDBsum" id="4U4O"/>
<dbReference type="PDBsum" id="4U4Q"/>
<dbReference type="PDBsum" id="4U4R"/>
<dbReference type="PDBsum" id="4U4U"/>
<dbReference type="PDBsum" id="4U4Y"/>
<dbReference type="PDBsum" id="4U4Z"/>
<dbReference type="PDBsum" id="4U50"/>
<dbReference type="PDBsum" id="4U51"/>
<dbReference type="PDBsum" id="4U52"/>
<dbReference type="PDBsum" id="4U53"/>
<dbReference type="PDBsum" id="4U55"/>
<dbReference type="PDBsum" id="4U56"/>
<dbReference type="PDBsum" id="4U6F"/>
<dbReference type="PDBsum" id="4V6I"/>
<dbReference type="PDBsum" id="4V7R"/>
<dbReference type="PDBsum" id="4V88"/>
<dbReference type="PDBsum" id="4V8Y"/>
<dbReference type="PDBsum" id="4V8Z"/>
<dbReference type="PDBsum" id="4V92"/>
<dbReference type="PDBsum" id="5DAT"/>
<dbReference type="PDBsum" id="5DC3"/>
<dbReference type="PDBsum" id="5DGE"/>
<dbReference type="PDBsum" id="5DGF"/>
<dbReference type="PDBsum" id="5DGV"/>
<dbReference type="PDBsum" id="5FCI"/>
<dbReference type="PDBsum" id="5FCJ"/>
<dbReference type="PDBsum" id="5I4L"/>
<dbReference type="PDBsum" id="5JUO"/>
<dbReference type="PDBsum" id="5JUP"/>
<dbReference type="PDBsum" id="5JUS"/>
<dbReference type="PDBsum" id="5JUT"/>
<dbReference type="PDBsum" id="5JUU"/>
<dbReference type="PDBsum" id="5LYB"/>
<dbReference type="PDBsum" id="5MEI"/>
<dbReference type="PDBsum" id="5NDG"/>
<dbReference type="PDBsum" id="5NDV"/>
<dbReference type="PDBsum" id="5NDW"/>
<dbReference type="PDBsum" id="5OBM"/>
<dbReference type="PDBsum" id="5ON6"/>
<dbReference type="PDBsum" id="5TBW"/>
<dbReference type="PDBsum" id="6EML"/>
<dbReference type="PDBsum" id="6FAI"/>
<dbReference type="PDBsum" id="6HHQ"/>
<dbReference type="PDBsum" id="6I7O"/>
<dbReference type="PDBsum" id="6Q8Y"/>
<dbReference type="PDBsum" id="6RBD"/>
<dbReference type="PDBsum" id="6RBE"/>
<dbReference type="PDBsum" id="6S47"/>
<dbReference type="PDBsum" id="6T4Q"/>
<dbReference type="PDBsum" id="6WDR"/>
<dbReference type="PDBsum" id="6Y7C"/>
<dbReference type="PDBsum" id="6Z6J"/>
<dbReference type="PDBsum" id="6Z6K"/>
<dbReference type="PDBsum" id="6ZCE"/>
<dbReference type="PDBsum" id="6ZU9"/>
<dbReference type="PDBsum" id="6ZVI"/>
<dbReference type="PDBsum" id="7MPI"/>
<dbReference type="PDBsum" id="7MPJ"/>
<dbReference type="PDBsum" id="7N8B"/>
<dbReference type="PDBsum" id="7ZRS"/>
<dbReference type="PDBsum" id="7ZUW"/>
<dbReference type="PDBsum" id="7ZUX"/>
<dbReference type="PDBsum" id="7ZW0"/>
<dbReference type="PDBsum" id="8BN3"/>
<dbReference type="PDBsum" id="8BQD"/>
<dbReference type="PDBsum" id="8BQX"/>
<dbReference type="PDBsum" id="8C01"/>
<dbReference type="PDBsum" id="8CAH"/>
<dbReference type="PDBsum" id="8CAS"/>
<dbReference type="PDBsum" id="8CBJ"/>
<dbReference type="PDBsum" id="8CCS"/>
<dbReference type="PDBsum" id="8CDL"/>
<dbReference type="PDBsum" id="8CDR"/>
<dbReference type="PDBsum" id="8CEH"/>
<dbReference type="PDBsum" id="8CF5"/>
<dbReference type="PDBsum" id="8CG8"/>
<dbReference type="PDBsum" id="8CGN"/>
<dbReference type="PDBsum" id="8CIV"/>
<dbReference type="PDBsum" id="8CKU"/>
<dbReference type="PDBsum" id="8CMJ"/>
<dbReference type="PDBsum" id="8EUB"/>
<dbReference type="PDBsum" id="8EVP"/>
<dbReference type="PDBsum" id="8EVQ"/>
<dbReference type="PDBsum" id="8EVR"/>
<dbReference type="PDBsum" id="8EVS"/>
<dbReference type="PDBsum" id="8EVT"/>
<dbReference type="PDBsum" id="8EWB"/>
<dbReference type="PDBsum" id="8EWC"/>
<dbReference type="PDBsum" id="8K2D"/>
<dbReference type="PDBsum" id="8K82"/>
<dbReference type="PDBsum" id="8P4V"/>
<dbReference type="PDBsum" id="8P9A"/>
<dbReference type="PDBsum" id="8T2X"/>
<dbReference type="PDBsum" id="8T2Y"/>
<dbReference type="PDBsum" id="8T2Z"/>
<dbReference type="PDBsum" id="8T30"/>
<dbReference type="PDBsum" id="8T3A"/>
<dbReference type="PDBsum" id="8T3B"/>
<dbReference type="PDBsum" id="8T3C"/>
<dbReference type="PDBsum" id="8T3D"/>
<dbReference type="PDBsum" id="8T3E"/>
<dbReference type="PDBsum" id="8T3F"/>
<dbReference type="PDBsum" id="8UT0"/>
<dbReference type="PDBsum" id="8UTI"/>
<dbReference type="PDBsum" id="8XU8"/>
<dbReference type="PDBsum" id="8YLD"/>
<dbReference type="PDBsum" id="8YLR"/>
<dbReference type="PDBsum" id="8Z70"/>
<dbReference type="PDBsum" id="8Z71"/>
<dbReference type="PDBsum" id="9F9S"/>
<dbReference type="EMDB" id="EMD-10098"/>
<dbReference type="EMDB" id="EMD-10377"/>
<dbReference type="EMDB" id="EMD-10713"/>
<dbReference type="EMDB" id="EMD-11096"/>
<dbReference type="EMDB" id="EMD-11097"/>
<dbReference type="EMDB" id="EMD-11160"/>
<dbReference type="EMDB" id="EMD-11439"/>
<dbReference type="EMDB" id="EMD-11457"/>
<dbReference type="EMDB" id="EMD-14921"/>
<dbReference type="EMDB" id="EMD-14978"/>
<dbReference type="EMDB" id="EMD-14979"/>
<dbReference type="EMDB" id="EMD-14990"/>
<dbReference type="EMDB" id="EMD-16182"/>
<dbReference type="EMDB" id="EMD-16191"/>
<dbReference type="EMDB" id="EMD-16349"/>
<dbReference type="EMDB" id="EMD-16525"/>
<dbReference type="EMDB" id="EMD-16533"/>
<dbReference type="EMDB" id="EMD-16541"/>
<dbReference type="EMDB" id="EMD-16563"/>
<dbReference type="EMDB" id="EMD-16591"/>
<dbReference type="EMDB" id="EMD-16594"/>
<dbReference type="EMDB" id="EMD-16609"/>
<dbReference type="EMDB" id="EMD-16616"/>
<dbReference type="EMDB" id="EMD-16634"/>
<dbReference type="EMDB" id="EMD-16648"/>
<dbReference type="EMDB" id="EMD-16684"/>
<dbReference type="EMDB" id="EMD-16702"/>
<dbReference type="EMDB" id="EMD-16729"/>
<dbReference type="EMDB" id="EMD-21644"/>
<dbReference type="EMDB" id="EMD-23934"/>
<dbReference type="EMDB" id="EMD-23935"/>
<dbReference type="EMDB" id="EMD-24235"/>
<dbReference type="EMDB" id="EMD-28610"/>
<dbReference type="EMDB" id="EMD-28632"/>
<dbReference type="EMDB" id="EMD-28633"/>
<dbReference type="EMDB" id="EMD-28634"/>
<dbReference type="EMDB" id="EMD-28635"/>
<dbReference type="EMDB" id="EMD-28636"/>
<dbReference type="EMDB" id="EMD-28642"/>
<dbReference type="EMDB" id="EMD-28643"/>
<dbReference type="EMDB" id="EMD-36839"/>
<dbReference type="EMDB" id="EMD-36945"/>
<dbReference type="EMDB" id="EMD-38660"/>
<dbReference type="EMDB" id="EMD-40990"/>
<dbReference type="EMDB" id="EMD-40991"/>
<dbReference type="EMDB" id="EMD-40992"/>
<dbReference type="EMDB" id="EMD-40993"/>
<dbReference type="EMDB" id="EMD-40997"/>
<dbReference type="EMDB" id="EMD-40998"/>
<dbReference type="EMDB" id="EMD-40999"/>
<dbReference type="EMDB" id="EMD-41000"/>
<dbReference type="EMDB" id="EMD-41001"/>
<dbReference type="EMDB" id="EMD-41002"/>
<dbReference type="EMDB" id="EMD-4214"/>
<dbReference type="EMDB" id="EMD-42525"/>
<dbReference type="EMDB" id="EMD-42540"/>
<dbReference type="EMDB" id="EMD-4427"/>
<dbReference type="EMDB" id="EMD-4474"/>
<dbReference type="EMDB" id="EMD-4792"/>
<dbReference type="EMDB" id="EMD-4793"/>
<dbReference type="EMDB" id="EMD-50259"/>
<dbReference type="SMR" id="P02407"/>
<dbReference type="BioGRID" id="35145">
    <property type="interactions" value="640"/>
</dbReference>
<dbReference type="ComplexPortal" id="CPX-1599">
    <property type="entry name" value="40S cytosolic small ribosomal subunit"/>
</dbReference>
<dbReference type="FunCoup" id="P02407">
    <property type="interactions" value="1226"/>
</dbReference>
<dbReference type="IntAct" id="P02407">
    <property type="interactions" value="100"/>
</dbReference>
<dbReference type="MINT" id="P02407"/>
<dbReference type="STRING" id="4932.YML024W"/>
<dbReference type="iPTMnet" id="P02407"/>
<dbReference type="PaxDb" id="4932-YML024W"/>
<dbReference type="PeptideAtlas" id="P02407"/>
<dbReference type="EnsemblFungi" id="YML024W_mRNA">
    <property type="protein sequence ID" value="YML024W"/>
    <property type="gene ID" value="YML024W"/>
</dbReference>
<dbReference type="GeneID" id="854984"/>
<dbReference type="KEGG" id="sce:YML024W"/>
<dbReference type="AGR" id="SGD:S000004486"/>
<dbReference type="SGD" id="S000004486">
    <property type="gene designation" value="RPS17A"/>
</dbReference>
<dbReference type="VEuPathDB" id="FungiDB:YML024W"/>
<dbReference type="eggNOG" id="KOG0187">
    <property type="taxonomic scope" value="Eukaryota"/>
</dbReference>
<dbReference type="GeneTree" id="ENSGT00390000006548"/>
<dbReference type="HOGENOM" id="CLU_112958_0_1_1"/>
<dbReference type="InParanoid" id="P02407"/>
<dbReference type="OMA" id="HTEHIEV"/>
<dbReference type="OrthoDB" id="1727351at2759"/>
<dbReference type="BioCyc" id="YEAST:G3O-32626-MONOMER"/>
<dbReference type="Reactome" id="R-SCE-156827">
    <property type="pathway name" value="L13a-mediated translational silencing of Ceruloplasmin expression"/>
</dbReference>
<dbReference type="Reactome" id="R-SCE-1799339">
    <property type="pathway name" value="SRP-dependent cotranslational protein targeting to membrane"/>
</dbReference>
<dbReference type="Reactome" id="R-SCE-72649">
    <property type="pathway name" value="Translation initiation complex formation"/>
</dbReference>
<dbReference type="Reactome" id="R-SCE-72689">
    <property type="pathway name" value="Formation of a pool of free 40S subunits"/>
</dbReference>
<dbReference type="Reactome" id="R-SCE-72695">
    <property type="pathway name" value="Formation of the ternary complex, and subsequently, the 43S complex"/>
</dbReference>
<dbReference type="Reactome" id="R-SCE-72702">
    <property type="pathway name" value="Ribosomal scanning and start codon recognition"/>
</dbReference>
<dbReference type="Reactome" id="R-SCE-72706">
    <property type="pathway name" value="GTP hydrolysis and joining of the 60S ribosomal subunit"/>
</dbReference>
<dbReference type="Reactome" id="R-SCE-975956">
    <property type="pathway name" value="Nonsense Mediated Decay (NMD) independent of the Exon Junction Complex (EJC)"/>
</dbReference>
<dbReference type="Reactome" id="R-SCE-975957">
    <property type="pathway name" value="Nonsense Mediated Decay (NMD) enhanced by the Exon Junction Complex (EJC)"/>
</dbReference>
<dbReference type="BioGRID-ORCS" id="854984">
    <property type="hits" value="0 hits in 10 CRISPR screens"/>
</dbReference>
<dbReference type="PRO" id="PR:P02407"/>
<dbReference type="Proteomes" id="UP000002311">
    <property type="component" value="Chromosome XIII"/>
</dbReference>
<dbReference type="RNAct" id="P02407">
    <property type="molecule type" value="protein"/>
</dbReference>
<dbReference type="GO" id="GO:0005829">
    <property type="term" value="C:cytosol"/>
    <property type="evidence" value="ECO:0000304"/>
    <property type="project" value="Reactome"/>
</dbReference>
<dbReference type="GO" id="GO:0022627">
    <property type="term" value="C:cytosolic small ribosomal subunit"/>
    <property type="evidence" value="ECO:0000303"/>
    <property type="project" value="SGD"/>
</dbReference>
<dbReference type="GO" id="GO:0003735">
    <property type="term" value="F:structural constituent of ribosome"/>
    <property type="evidence" value="ECO:0000303"/>
    <property type="project" value="SGD"/>
</dbReference>
<dbReference type="GO" id="GO:0002181">
    <property type="term" value="P:cytoplasmic translation"/>
    <property type="evidence" value="ECO:0000303"/>
    <property type="project" value="SGD"/>
</dbReference>
<dbReference type="GO" id="GO:0000028">
    <property type="term" value="P:ribosomal small subunit assembly"/>
    <property type="evidence" value="ECO:0000315"/>
    <property type="project" value="SGD"/>
</dbReference>
<dbReference type="FunFam" id="1.10.60.20:FF:000001">
    <property type="entry name" value="40S ribosomal protein S17"/>
    <property type="match status" value="1"/>
</dbReference>
<dbReference type="Gene3D" id="1.10.60.20">
    <property type="entry name" value="Ribosomal protein S17e-like"/>
    <property type="match status" value="1"/>
</dbReference>
<dbReference type="HAMAP" id="MF_00511">
    <property type="entry name" value="Ribosomal_eS17"/>
    <property type="match status" value="1"/>
</dbReference>
<dbReference type="InterPro" id="IPR001210">
    <property type="entry name" value="Ribosomal_eS17"/>
</dbReference>
<dbReference type="InterPro" id="IPR018273">
    <property type="entry name" value="Ribosomal_eS17_CS"/>
</dbReference>
<dbReference type="InterPro" id="IPR036401">
    <property type="entry name" value="Ribosomal_eS17_sf"/>
</dbReference>
<dbReference type="NCBIfam" id="NF002242">
    <property type="entry name" value="PRK01151.1"/>
    <property type="match status" value="1"/>
</dbReference>
<dbReference type="PANTHER" id="PTHR10732">
    <property type="entry name" value="40S RIBOSOMAL PROTEIN S17"/>
    <property type="match status" value="1"/>
</dbReference>
<dbReference type="PANTHER" id="PTHR10732:SF0">
    <property type="entry name" value="40S RIBOSOMAL PROTEIN S17"/>
    <property type="match status" value="1"/>
</dbReference>
<dbReference type="Pfam" id="PF00833">
    <property type="entry name" value="Ribosomal_S17e"/>
    <property type="match status" value="1"/>
</dbReference>
<dbReference type="SUPFAM" id="SSF116820">
    <property type="entry name" value="Rps17e-like"/>
    <property type="match status" value="1"/>
</dbReference>
<dbReference type="PROSITE" id="PS00712">
    <property type="entry name" value="RIBOSOMAL_S17E"/>
    <property type="match status" value="1"/>
</dbReference>
<proteinExistence type="evidence at protein level"/>
<evidence type="ECO:0000269" key="1">
    <source>
    </source>
</evidence>
<evidence type="ECO:0000269" key="2">
    <source>
    </source>
</evidence>
<evidence type="ECO:0000269" key="3">
    <source>
    </source>
</evidence>
<evidence type="ECO:0000303" key="4">
    <source>
    </source>
</evidence>
<evidence type="ECO:0000303" key="5">
    <source>
    </source>
</evidence>
<evidence type="ECO:0000305" key="6"/>
<evidence type="ECO:0000305" key="7">
    <source>
    </source>
</evidence>
<evidence type="ECO:0000305" key="8">
    <source>
    </source>
</evidence>
<evidence type="ECO:0007829" key="9">
    <source>
        <dbReference type="PDB" id="6RBD"/>
    </source>
</evidence>
<evidence type="ECO:0007829" key="10">
    <source>
        <dbReference type="PDB" id="6ZVI"/>
    </source>
</evidence>
<evidence type="ECO:0007829" key="11">
    <source>
        <dbReference type="PDB" id="8C01"/>
    </source>
</evidence>
<evidence type="ECO:0007829" key="12">
    <source>
        <dbReference type="PDB" id="8CAS"/>
    </source>
</evidence>
<feature type="chain" id="PRO_0000141546" description="Small ribosomal subunit protein eS17A">
    <location>
        <begin position="1"/>
        <end position="136"/>
    </location>
</feature>
<feature type="helix" evidence="10">
    <location>
        <begin position="7"/>
        <end position="17"/>
    </location>
</feature>
<feature type="turn" evidence="10">
    <location>
        <begin position="18"/>
        <end position="20"/>
    </location>
</feature>
<feature type="helix" evidence="10">
    <location>
        <begin position="21"/>
        <end position="23"/>
    </location>
</feature>
<feature type="turn" evidence="10">
    <location>
        <begin position="29"/>
        <end position="31"/>
    </location>
</feature>
<feature type="helix" evidence="10">
    <location>
        <begin position="32"/>
        <end position="38"/>
    </location>
</feature>
<feature type="strand" evidence="12">
    <location>
        <begin position="39"/>
        <end position="43"/>
    </location>
</feature>
<feature type="helix" evidence="10">
    <location>
        <begin position="44"/>
        <end position="59"/>
    </location>
</feature>
<feature type="strand" evidence="10">
    <location>
        <begin position="62"/>
        <end position="64"/>
    </location>
</feature>
<feature type="helix" evidence="11">
    <location>
        <begin position="72"/>
        <end position="81"/>
    </location>
</feature>
<feature type="strand" evidence="9">
    <location>
        <begin position="90"/>
        <end position="92"/>
    </location>
</feature>
<feature type="helix" evidence="11">
    <location>
        <begin position="93"/>
        <end position="96"/>
    </location>
</feature>
<feature type="strand" evidence="11">
    <location>
        <begin position="100"/>
        <end position="103"/>
    </location>
</feature>
<feature type="helix" evidence="11">
    <location>
        <begin position="104"/>
        <end position="113"/>
    </location>
</feature>
<feature type="strand" evidence="11">
    <location>
        <begin position="119"/>
        <end position="122"/>
    </location>
</feature>
<name>RS17A_YEAST</name>
<keyword id="KW-0002">3D-structure</keyword>
<keyword id="KW-0963">Cytoplasm</keyword>
<keyword id="KW-1185">Reference proteome</keyword>
<keyword id="KW-0687">Ribonucleoprotein</keyword>
<keyword id="KW-0689">Ribosomal protein</keyword>
<reference key="1">
    <citation type="journal article" date="1983" name="Proc. Natl. Acad. Sci. U.S.A.">
        <title>Expression of a beta-galactosidase gene containing the ribosomal protein 51 intron is sensitive to the rna2 mutation of yeast.</title>
        <authorList>
            <person name="Teem J.L."/>
            <person name="Rosbash M."/>
        </authorList>
    </citation>
    <scope>NUCLEOTIDE SEQUENCE [GENOMIC DNA]</scope>
    <source>
        <strain>RY26</strain>
    </source>
</reference>
<reference key="2">
    <citation type="journal article" date="1997" name="Nature">
        <title>The nucleotide sequence of Saccharomyces cerevisiae chromosome XIII.</title>
        <authorList>
            <person name="Bowman S."/>
            <person name="Churcher C.M."/>
            <person name="Badcock K."/>
            <person name="Brown D."/>
            <person name="Chillingworth T."/>
            <person name="Connor R."/>
            <person name="Dedman K."/>
            <person name="Devlin K."/>
            <person name="Gentles S."/>
            <person name="Hamlin N."/>
            <person name="Hunt S."/>
            <person name="Jagels K."/>
            <person name="Lye G."/>
            <person name="Moule S."/>
            <person name="Odell C."/>
            <person name="Pearson D."/>
            <person name="Rajandream M.A."/>
            <person name="Rice P."/>
            <person name="Skelton J."/>
            <person name="Walsh S.V."/>
            <person name="Whitehead S."/>
            <person name="Barrell B.G."/>
        </authorList>
    </citation>
    <scope>NUCLEOTIDE SEQUENCE [LARGE SCALE GENOMIC DNA]</scope>
    <source>
        <strain>ATCC 204508 / S288c</strain>
    </source>
</reference>
<reference key="3">
    <citation type="journal article" date="2014" name="G3 (Bethesda)">
        <title>The reference genome sequence of Saccharomyces cerevisiae: Then and now.</title>
        <authorList>
            <person name="Engel S.R."/>
            <person name="Dietrich F.S."/>
            <person name="Fisk D.G."/>
            <person name="Binkley G."/>
            <person name="Balakrishnan R."/>
            <person name="Costanzo M.C."/>
            <person name="Dwight S.S."/>
            <person name="Hitz B.C."/>
            <person name="Karra K."/>
            <person name="Nash R.S."/>
            <person name="Weng S."/>
            <person name="Wong E.D."/>
            <person name="Lloyd P."/>
            <person name="Skrzypek M.S."/>
            <person name="Miyasato S.R."/>
            <person name="Simison M."/>
            <person name="Cherry J.M."/>
        </authorList>
    </citation>
    <scope>GENOME REANNOTATION</scope>
    <source>
        <strain>ATCC 204508 / S288c</strain>
    </source>
</reference>
<reference key="4">
    <citation type="journal article" date="1998" name="Yeast">
        <title>The list of cytoplasmic ribosomal proteins of Saccharomyces cerevisiae.</title>
        <authorList>
            <person name="Planta R.J."/>
            <person name="Mager W.H."/>
        </authorList>
    </citation>
    <scope>NOMENCLATURE</scope>
    <scope>SUBUNIT</scope>
</reference>
<reference key="5">
    <citation type="journal article" date="2003" name="Nature">
        <title>Global analysis of protein localization in budding yeast.</title>
        <authorList>
            <person name="Huh W.-K."/>
            <person name="Falvo J.V."/>
            <person name="Gerke L.C."/>
            <person name="Carroll A.S."/>
            <person name="Howson R.W."/>
            <person name="Weissman J.S."/>
            <person name="O'Shea E.K."/>
        </authorList>
    </citation>
    <scope>SUBCELLULAR LOCATION [LARGE SCALE ANALYSIS]</scope>
</reference>
<reference key="6">
    <citation type="journal article" date="2003" name="Nature">
        <title>Global analysis of protein expression in yeast.</title>
        <authorList>
            <person name="Ghaemmaghami S."/>
            <person name="Huh W.-K."/>
            <person name="Bower K."/>
            <person name="Howson R.W."/>
            <person name="Belle A."/>
            <person name="Dephoure N."/>
            <person name="O'Shea E.K."/>
            <person name="Weissman J.S."/>
        </authorList>
    </citation>
    <scope>LEVEL OF PROTEIN EXPRESSION [LARGE SCALE ANALYSIS]</scope>
</reference>
<reference key="7">
    <citation type="journal article" date="2014" name="Curr. Opin. Struct. Biol.">
        <title>A new system for naming ribosomal proteins.</title>
        <authorList>
            <person name="Ban N."/>
            <person name="Beckmann R."/>
            <person name="Cate J.H.D."/>
            <person name="Dinman J.D."/>
            <person name="Dragon F."/>
            <person name="Ellis S.R."/>
            <person name="Lafontaine D.L.J."/>
            <person name="Lindahl L."/>
            <person name="Liljas A."/>
            <person name="Lipton J.M."/>
            <person name="McAlear M.A."/>
            <person name="Moore P.B."/>
            <person name="Noller H.F."/>
            <person name="Ortega J."/>
            <person name="Panse V.G."/>
            <person name="Ramakrishnan V."/>
            <person name="Spahn C.M.T."/>
            <person name="Steitz T.A."/>
            <person name="Tchorzewski M."/>
            <person name="Tollervey D."/>
            <person name="Warren A.J."/>
            <person name="Williamson J.R."/>
            <person name="Wilson D."/>
            <person name="Yonath A."/>
            <person name="Yusupov M."/>
        </authorList>
    </citation>
    <scope>NOMENCLATURE</scope>
</reference>
<reference key="8">
    <citation type="journal article" date="2010" name="Science">
        <title>Crystal structure of the eukaryotic ribosome.</title>
        <authorList>
            <person name="Ben-Shem A."/>
            <person name="Jenner L."/>
            <person name="Yusupova G."/>
            <person name="Yusupov M."/>
        </authorList>
    </citation>
    <scope>X-RAY CRYSTALLOGRAPHY (4.00 ANGSTROMS) OF 80S RIBOSOME</scope>
</reference>
<reference key="9">
    <citation type="journal article" date="2011" name="Science">
        <title>The structure of the eukaryotic ribosome at 3.0 A resolution.</title>
        <authorList>
            <person name="Ben-Shem A."/>
            <person name="Garreau de Loubresse N."/>
            <person name="Melnikov S."/>
            <person name="Jenner L."/>
            <person name="Yusupova G."/>
            <person name="Yusupov M."/>
        </authorList>
    </citation>
    <scope>X-RAY CRYSTALLOGRAPHY (3.00 ANGSTROMS) OF 80S RIBOSOME</scope>
    <scope>SUBUNIT</scope>
    <scope>SUBCELLULAR LOCATION</scope>
</reference>
<gene>
    <name evidence="5" type="primary">RPS17A</name>
    <name type="synonym">RP51A</name>
    <name type="ordered locus">YML024W</name>
</gene>